<gene>
    <name type="primary">HOX27</name>
    <name type="ordered locus">Os08g0465000</name>
    <name type="ordered locus">LOC_Os08g36220</name>
    <name type="ORF">OSJNOa174H12.5</name>
</gene>
<accession>Q6YPD0</accession>
<accession>Q0J557</accession>
<accession>Q6Q4Z9</accession>
<organism>
    <name type="scientific">Oryza sativa subsp. japonica</name>
    <name type="common">Rice</name>
    <dbReference type="NCBI Taxonomy" id="39947"/>
    <lineage>
        <taxon>Eukaryota</taxon>
        <taxon>Viridiplantae</taxon>
        <taxon>Streptophyta</taxon>
        <taxon>Embryophyta</taxon>
        <taxon>Tracheophyta</taxon>
        <taxon>Spermatophyta</taxon>
        <taxon>Magnoliopsida</taxon>
        <taxon>Liliopsida</taxon>
        <taxon>Poales</taxon>
        <taxon>Poaceae</taxon>
        <taxon>BOP clade</taxon>
        <taxon>Oryzoideae</taxon>
        <taxon>Oryzeae</taxon>
        <taxon>Oryzinae</taxon>
        <taxon>Oryza</taxon>
        <taxon>Oryza sativa</taxon>
    </lineage>
</organism>
<evidence type="ECO:0000250" key="1"/>
<evidence type="ECO:0000255" key="2">
    <source>
        <dbReference type="PROSITE-ProRule" id="PRU00108"/>
    </source>
</evidence>
<evidence type="ECO:0000256" key="3">
    <source>
        <dbReference type="SAM" id="MobiDB-lite"/>
    </source>
</evidence>
<evidence type="ECO:0000269" key="4">
    <source>
    </source>
</evidence>
<evidence type="ECO:0000305" key="5"/>
<protein>
    <recommendedName>
        <fullName>Homeobox-leucine zipper protein HOX27</fullName>
    </recommendedName>
    <alternativeName>
        <fullName>HD-ZIP protein HOX27</fullName>
    </alternativeName>
    <alternativeName>
        <fullName>Homeodomain transcription factor HOX27</fullName>
    </alternativeName>
    <alternativeName>
        <fullName>OsHox27</fullName>
    </alternativeName>
</protein>
<proteinExistence type="evidence at transcript level"/>
<keyword id="KW-0238">DNA-binding</keyword>
<keyword id="KW-0371">Homeobox</keyword>
<keyword id="KW-0539">Nucleus</keyword>
<keyword id="KW-1185">Reference proteome</keyword>
<keyword id="KW-0804">Transcription</keyword>
<keyword id="KW-0805">Transcription regulation</keyword>
<sequence>MELGLSLGDAVTVADGGRLELVLGLGVGVGAGVRRGEEEERGRREDVVGAGRWAAMAAASPEPSVRLSLVSSLGLHWPSETGRSEAAARGFDVNRAPSVAAGAPGMEDDEEGPGAAPALSSSPNDSGGSFPLDLSGQGLRGHAEAAAQGGGGGGGGERSSSRASDDDEGASARKKLRLSKEQSAFLEESFKEHSTLNPKQKVALAKQLNLRPRQVEVWFQNRRARTKLKQTEVDCEYLKRCCETLTEENRRLHKELAELRALKTARPFYMHLPATTLSMCPSCERVASNPATASTSAPAAATSPAAAPTAAARTAVASPEPHRPSSFAALFAAPLGFPLTAAQPRPPPPASNCL</sequence>
<dbReference type="EMBL" id="AP006845">
    <property type="protein sequence ID" value="BAD17827.1"/>
    <property type="molecule type" value="Genomic_DNA"/>
</dbReference>
<dbReference type="EMBL" id="AP008214">
    <property type="protein sequence ID" value="BAF23908.1"/>
    <property type="status" value="ALT_SEQ"/>
    <property type="molecule type" value="Genomic_DNA"/>
</dbReference>
<dbReference type="EMBL" id="AP014964">
    <property type="status" value="NOT_ANNOTATED_CDS"/>
    <property type="molecule type" value="Genomic_DNA"/>
</dbReference>
<dbReference type="EMBL" id="AK241196">
    <property type="status" value="NOT_ANNOTATED_CDS"/>
    <property type="molecule type" value="mRNA"/>
</dbReference>
<dbReference type="EMBL" id="AY559049">
    <property type="protein sequence ID" value="AAS68140.1"/>
    <property type="molecule type" value="Genomic_DNA"/>
</dbReference>
<dbReference type="SMR" id="Q6YPD0"/>
<dbReference type="FunCoup" id="Q6YPD0">
    <property type="interactions" value="60"/>
</dbReference>
<dbReference type="STRING" id="39947.Q6YPD0"/>
<dbReference type="PaxDb" id="39947-Q6YPD0"/>
<dbReference type="GeneID" id="9271357"/>
<dbReference type="KEGG" id="osa:9271357"/>
<dbReference type="InParanoid" id="Q6YPD0"/>
<dbReference type="OrthoDB" id="6159439at2759"/>
<dbReference type="Proteomes" id="UP000000763">
    <property type="component" value="Chromosome 8"/>
</dbReference>
<dbReference type="Proteomes" id="UP000059680">
    <property type="component" value="Chromosome 8"/>
</dbReference>
<dbReference type="GO" id="GO:0005634">
    <property type="term" value="C:nucleus"/>
    <property type="evidence" value="ECO:0007669"/>
    <property type="project" value="UniProtKB-SubCell"/>
</dbReference>
<dbReference type="GO" id="GO:0000981">
    <property type="term" value="F:DNA-binding transcription factor activity, RNA polymerase II-specific"/>
    <property type="evidence" value="ECO:0007669"/>
    <property type="project" value="InterPro"/>
</dbReference>
<dbReference type="GO" id="GO:0043565">
    <property type="term" value="F:sequence-specific DNA binding"/>
    <property type="evidence" value="ECO:0007669"/>
    <property type="project" value="InterPro"/>
</dbReference>
<dbReference type="CDD" id="cd00086">
    <property type="entry name" value="homeodomain"/>
    <property type="match status" value="1"/>
</dbReference>
<dbReference type="FunFam" id="1.10.10.60:FF:000577">
    <property type="entry name" value="Homeobox-leucine zipper protein 18"/>
    <property type="match status" value="1"/>
</dbReference>
<dbReference type="Gene3D" id="1.10.10.60">
    <property type="entry name" value="Homeodomain-like"/>
    <property type="match status" value="1"/>
</dbReference>
<dbReference type="InterPro" id="IPR001356">
    <property type="entry name" value="HD"/>
</dbReference>
<dbReference type="InterPro" id="IPR050762">
    <property type="entry name" value="HD-ZIP_Homeobox_LZ_Class_II"/>
</dbReference>
<dbReference type="InterPro" id="IPR017970">
    <property type="entry name" value="Homeobox_CS"/>
</dbReference>
<dbReference type="InterPro" id="IPR009057">
    <property type="entry name" value="Homeodomain-like_sf"/>
</dbReference>
<dbReference type="InterPro" id="IPR003106">
    <property type="entry name" value="Leu_zip_homeo"/>
</dbReference>
<dbReference type="PANTHER" id="PTHR45714">
    <property type="entry name" value="HOMEOBOX-LEUCINE ZIPPER PROTEIN HAT14"/>
    <property type="match status" value="1"/>
</dbReference>
<dbReference type="PANTHER" id="PTHR45714:SF22">
    <property type="entry name" value="HOMEOBOX-LEUCINE ZIPPER PROTEIN HOX27"/>
    <property type="match status" value="1"/>
</dbReference>
<dbReference type="Pfam" id="PF02183">
    <property type="entry name" value="HALZ"/>
    <property type="match status" value="1"/>
</dbReference>
<dbReference type="Pfam" id="PF00046">
    <property type="entry name" value="Homeodomain"/>
    <property type="match status" value="1"/>
</dbReference>
<dbReference type="SMART" id="SM00340">
    <property type="entry name" value="HALZ"/>
    <property type="match status" value="1"/>
</dbReference>
<dbReference type="SMART" id="SM00389">
    <property type="entry name" value="HOX"/>
    <property type="match status" value="1"/>
</dbReference>
<dbReference type="SUPFAM" id="SSF46689">
    <property type="entry name" value="Homeodomain-like"/>
    <property type="match status" value="1"/>
</dbReference>
<dbReference type="PROSITE" id="PS00027">
    <property type="entry name" value="HOMEOBOX_1"/>
    <property type="match status" value="1"/>
</dbReference>
<dbReference type="PROSITE" id="PS50071">
    <property type="entry name" value="HOMEOBOX_2"/>
    <property type="match status" value="1"/>
</dbReference>
<reference key="1">
    <citation type="journal article" date="2005" name="Nature">
        <title>The map-based sequence of the rice genome.</title>
        <authorList>
            <consortium name="International rice genome sequencing project (IRGSP)"/>
        </authorList>
    </citation>
    <scope>NUCLEOTIDE SEQUENCE [LARGE SCALE GENOMIC DNA]</scope>
    <source>
        <strain>cv. Nipponbare</strain>
    </source>
</reference>
<reference key="2">
    <citation type="journal article" date="2008" name="Nucleic Acids Res.">
        <title>The rice annotation project database (RAP-DB): 2008 update.</title>
        <authorList>
            <consortium name="The rice annotation project (RAP)"/>
        </authorList>
    </citation>
    <scope>GENOME REANNOTATION</scope>
    <source>
        <strain>cv. Nipponbare</strain>
    </source>
</reference>
<reference key="3">
    <citation type="journal article" date="2013" name="Rice">
        <title>Improvement of the Oryza sativa Nipponbare reference genome using next generation sequence and optical map data.</title>
        <authorList>
            <person name="Kawahara Y."/>
            <person name="de la Bastide M."/>
            <person name="Hamilton J.P."/>
            <person name="Kanamori H."/>
            <person name="McCombie W.R."/>
            <person name="Ouyang S."/>
            <person name="Schwartz D.C."/>
            <person name="Tanaka T."/>
            <person name="Wu J."/>
            <person name="Zhou S."/>
            <person name="Childs K.L."/>
            <person name="Davidson R.M."/>
            <person name="Lin H."/>
            <person name="Quesada-Ocampo L."/>
            <person name="Vaillancourt B."/>
            <person name="Sakai H."/>
            <person name="Lee S.S."/>
            <person name="Kim J."/>
            <person name="Numa H."/>
            <person name="Itoh T."/>
            <person name="Buell C.R."/>
            <person name="Matsumoto T."/>
        </authorList>
    </citation>
    <scope>GENOME REANNOTATION</scope>
    <source>
        <strain>cv. Nipponbare</strain>
    </source>
</reference>
<reference key="4">
    <citation type="submission" date="2006-10" db="EMBL/GenBank/DDBJ databases">
        <title>Oryza sativa full length cDNA.</title>
        <authorList>
            <consortium name="The rice full-length cDNA consortium"/>
        </authorList>
    </citation>
    <scope>NUCLEOTIDE SEQUENCE [LARGE SCALE MRNA]</scope>
    <source>
        <strain>cv. Nipponbare</strain>
    </source>
</reference>
<reference key="5">
    <citation type="journal article" date="2008" name="Plant Mol. Biol.">
        <title>A genome-wide survey of HD-Zip genes in rice and analysis of drought-responsive family members.</title>
        <authorList>
            <person name="Agalou A."/>
            <person name="Purwantomo S."/>
            <person name="Oevernaes E."/>
            <person name="Johannesson H."/>
            <person name="Zhu X."/>
            <person name="Estiati A."/>
            <person name="de Kam R.J."/>
            <person name="Engstroem P."/>
            <person name="Slamet-Loedin I.H."/>
            <person name="Zhu Z."/>
            <person name="Wang M."/>
            <person name="Xiong L."/>
            <person name="Meijer A.H."/>
            <person name="Ouwerkerk P.B.F."/>
        </authorList>
    </citation>
    <scope>NUCLEOTIDE SEQUENCE [MRNA] OF 199-264</scope>
    <scope>TISSUE SPECIFICITY</scope>
    <scope>GENE FAMILY</scope>
    <scope>NOMENCLATURE</scope>
    <source>
        <strain>cv. Nipponbare</strain>
    </source>
</reference>
<comment type="function">
    <text evidence="1">Probable transcription factor.</text>
</comment>
<comment type="subcellular location">
    <subcellularLocation>
        <location evidence="5">Nucleus</location>
    </subcellularLocation>
</comment>
<comment type="tissue specificity">
    <text evidence="4">Expressed in seedlings, roots, stems, leaf sheaths and blades and panicles.</text>
</comment>
<comment type="similarity">
    <text evidence="5">Belongs to the HD-ZIP homeobox family. Class II subfamily.</text>
</comment>
<comment type="sequence caution" evidence="5">
    <conflict type="erroneous gene model prediction">
        <sequence resource="EMBL-CDS" id="BAF23908"/>
    </conflict>
</comment>
<name>HOX27_ORYSJ</name>
<feature type="chain" id="PRO_0000331726" description="Homeobox-leucine zipper protein HOX27">
    <location>
        <begin position="1"/>
        <end position="354"/>
    </location>
</feature>
<feature type="DNA-binding region" description="Homeobox" evidence="2">
    <location>
        <begin position="171"/>
        <end position="230"/>
    </location>
</feature>
<feature type="region of interest" description="Disordered" evidence="3">
    <location>
        <begin position="98"/>
        <end position="175"/>
    </location>
</feature>
<feature type="region of interest" description="Leucine-zipper">
    <location>
        <begin position="229"/>
        <end position="273"/>
    </location>
</feature>
<feature type="region of interest" description="Disordered" evidence="3">
    <location>
        <begin position="294"/>
        <end position="323"/>
    </location>
</feature>
<feature type="compositionally biased region" description="Gly residues" evidence="3">
    <location>
        <begin position="148"/>
        <end position="157"/>
    </location>
</feature>
<feature type="sequence conflict" description="In Ref. 5; AAS68140." evidence="5" ref="5">
    <original>L</original>
    <variation>P</variation>
    <location>
        <position position="208"/>
    </location>
</feature>